<proteinExistence type="evidence at protein level"/>
<feature type="chain" id="PRO_0000437592" description="Methylphloroacetophenone oxidase">
    <location>
        <begin position="1"/>
        <end position="445"/>
    </location>
</feature>
<feature type="transmembrane region" description="Helical" evidence="1">
    <location>
        <begin position="25"/>
        <end position="45"/>
    </location>
</feature>
<feature type="glycosylation site" description="N-linked (GlcNAc...) asparagine" evidence="2">
    <location>
        <position position="51"/>
    </location>
</feature>
<keyword id="KW-0325">Glycoprotein</keyword>
<keyword id="KW-0472">Membrane</keyword>
<keyword id="KW-0560">Oxidoreductase</keyword>
<keyword id="KW-0812">Transmembrane</keyword>
<keyword id="KW-1133">Transmembrane helix</keyword>
<sequence>MISPVSSILASIWDNSKLLLDHTSVLSIALIGVACAISIRSILYVRLACANYSILLLTHAQRLRLAYSTPLRHVPGPWYAKFTALGLRANDVAGNRWYYVQGLHKKYGSIVRIAPEEVAISDPKVVSKVHALGTEFRKRQQPGTPFNIFSISDPKAHRTRQRFYAKAFSDETLKASTEPAVRQLIKTAVASIKRDAALRKDHTADVYKWCMLFGSDVAFQVIYGNSNTEGLMATQKTTDEVIMGAYLQRMNAWAQFCFPVFLLGRWLSPLSPTLHNIFRVEEKYGDFWQEGQRQREIAARTVFVQNTKYSKNDGVFSVSDEVKLSDVDIAHDITTFLGAGGEPVGASLVFLIWQVLRMPDLQRELEAEVAGLTEPITDATTAQLPILNGVIYETLRLYGGGVTQMPRYAPIATELGGYVIPPGTAVTTHTGALHRNPAAWDDPEK</sequence>
<comment type="function">
    <text evidence="4">Methylphloroacetophenone oxidase; part of the gene cluster that mediates the biosynthesis of usnic acid, a dibenzofuran lichen product possessing a broad spectrum of biological activities (PubMed:26895859). Two genes, mpas and mpao, comprise the usnic acid biosynthetic gene cluster with a single post-PKS enzyme, the methylphloracetophenone oxidase (mpao) (PubMed:26895859). The methylphloroacetophenone synthase (mpas) is a non-reducing polyketide synthase that produces methylphloracetophenone from acetate via a methylated tetraketide intermediate (PubMed:26895859). The methylphloroacetophenone oxidase then carries out the oxidative dimerization of methylphloracetophenone to usnic acid (PubMed:26895859).</text>
</comment>
<comment type="pathway">
    <text evidence="4">Secondary metabolite biosynthesis.</text>
</comment>
<comment type="subcellular location">
    <subcellularLocation>
        <location evidence="1">Membrane</location>
        <topology evidence="1">Single-pass membrane protein</topology>
    </subcellularLocation>
</comment>
<comment type="biotechnology">
    <text evidence="3">Lichens belonging to usnic acid-containing genera have been used as crude drugs throughout the world (PubMed:25707417). Usnic acid is a potentially interesting candidate for such activities as anti-inflammatory, analgesic, healing, antioxidant, antimicrobial, antiprotozoal, antiviral, larvicidal and UV protection (PubMed:25707417). However, it was shown to be toxic for the liver and to lead to contact allergy (PubMed:25707417).</text>
</comment>
<comment type="similarity">
    <text evidence="6">Belongs to the cytochrome P450 family.</text>
</comment>
<evidence type="ECO:0000255" key="1"/>
<evidence type="ECO:0000255" key="2">
    <source>
        <dbReference type="PROSITE-ProRule" id="PRU00498"/>
    </source>
</evidence>
<evidence type="ECO:0000269" key="3">
    <source>
    </source>
</evidence>
<evidence type="ECO:0000269" key="4">
    <source>
    </source>
</evidence>
<evidence type="ECO:0000303" key="5">
    <source>
    </source>
</evidence>
<evidence type="ECO:0000305" key="6"/>
<name>MPAO_CLAUC</name>
<organism>
    <name type="scientific">Cladonia uncialis</name>
    <name type="common">Cup lichen</name>
    <dbReference type="NCBI Taxonomy" id="174080"/>
    <lineage>
        <taxon>Eukaryota</taxon>
        <taxon>Fungi</taxon>
        <taxon>Dikarya</taxon>
        <taxon>Ascomycota</taxon>
        <taxon>Pezizomycotina</taxon>
        <taxon>Lecanoromycetes</taxon>
        <taxon>OSLEUM clade</taxon>
        <taxon>Lecanoromycetidae</taxon>
        <taxon>Lecanorales</taxon>
        <taxon>Lecanorineae</taxon>
        <taxon>Cladoniaceae</taxon>
        <taxon>Cladonia</taxon>
    </lineage>
</organism>
<dbReference type="EC" id="1.-.-.-" evidence="6"/>
<dbReference type="EMBL" id="KT363733">
    <property type="protein sequence ID" value="ALA62324.1"/>
    <property type="molecule type" value="Genomic_DNA"/>
</dbReference>
<dbReference type="GlyCosmos" id="A0A0R8YXT5">
    <property type="glycosylation" value="1 site, No reported glycans"/>
</dbReference>
<dbReference type="GO" id="GO:0016020">
    <property type="term" value="C:membrane"/>
    <property type="evidence" value="ECO:0007669"/>
    <property type="project" value="UniProtKB-SubCell"/>
</dbReference>
<dbReference type="GO" id="GO:0020037">
    <property type="term" value="F:heme binding"/>
    <property type="evidence" value="ECO:0007669"/>
    <property type="project" value="InterPro"/>
</dbReference>
<dbReference type="GO" id="GO:0005506">
    <property type="term" value="F:iron ion binding"/>
    <property type="evidence" value="ECO:0007669"/>
    <property type="project" value="InterPro"/>
</dbReference>
<dbReference type="GO" id="GO:0004497">
    <property type="term" value="F:monooxygenase activity"/>
    <property type="evidence" value="ECO:0007669"/>
    <property type="project" value="InterPro"/>
</dbReference>
<dbReference type="GO" id="GO:0016705">
    <property type="term" value="F:oxidoreductase activity, acting on paired donors, with incorporation or reduction of molecular oxygen"/>
    <property type="evidence" value="ECO:0007669"/>
    <property type="project" value="InterPro"/>
</dbReference>
<dbReference type="Gene3D" id="1.10.630.10">
    <property type="entry name" value="Cytochrome P450"/>
    <property type="match status" value="1"/>
</dbReference>
<dbReference type="InterPro" id="IPR001128">
    <property type="entry name" value="Cyt_P450"/>
</dbReference>
<dbReference type="InterPro" id="IPR036396">
    <property type="entry name" value="Cyt_P450_sf"/>
</dbReference>
<dbReference type="InterPro" id="IPR050121">
    <property type="entry name" value="Cytochrome_P450_monoxygenase"/>
</dbReference>
<dbReference type="PANTHER" id="PTHR24305">
    <property type="entry name" value="CYTOCHROME P450"/>
    <property type="match status" value="1"/>
</dbReference>
<dbReference type="PANTHER" id="PTHR24305:SF96">
    <property type="entry name" value="CYTOCHROME P450 MONOOXYGENASE STCB-RELATED"/>
    <property type="match status" value="1"/>
</dbReference>
<dbReference type="Pfam" id="PF00067">
    <property type="entry name" value="p450"/>
    <property type="match status" value="1"/>
</dbReference>
<dbReference type="SUPFAM" id="SSF48264">
    <property type="entry name" value="Cytochrome P450"/>
    <property type="match status" value="1"/>
</dbReference>
<accession>A0A0R8YXT5</accession>
<reference key="1">
    <citation type="journal article" date="2016" name="Fungal Biol.">
        <title>Putative identification of the usnic acid biosynthetic gene cluster by de novo whole-genome sequencing of a lichen-forming fungus.</title>
        <authorList>
            <person name="Abdel-Hameed M.D."/>
            <person name="Bertrand R.L."/>
            <person name="Piercey-Normore M.D."/>
            <person name="Sorensen J.L."/>
        </authorList>
    </citation>
    <scope>NUCLEOTIDE SEQUENCE [GENOMIC DNA]</scope>
    <scope>FUNCTION</scope>
    <scope>INDUCTION</scope>
</reference>
<reference key="2">
    <citation type="submission" date="2016-02" db="EMBL/GenBank/DDBJ databases">
        <authorList>
            <person name="Wen L."/>
            <person name="He K."/>
            <person name="Yang H."/>
        </authorList>
    </citation>
    <scope>NUCLEOTIDE SEQUENCE [GENOMIC DNA]</scope>
</reference>
<reference key="3">
    <citation type="journal article" date="2015" name="Nat. Prod. Res.">
        <title>Review of the biological properties and toxicity of usnic acid.</title>
        <authorList>
            <person name="Araujo A.A."/>
            <person name="de Melo M.G."/>
            <person name="Rabelo T.K."/>
            <person name="Nunes P.S."/>
            <person name="Santos S.L."/>
            <person name="Serafini M.R."/>
            <person name="Santos M.R."/>
            <person name="Quintans-Junior L.J."/>
            <person name="Gelain D.P."/>
        </authorList>
    </citation>
    <scope>REVIEW ON BIOTECHNOLOGY</scope>
</reference>
<protein>
    <recommendedName>
        <fullName evidence="5">Methylphloroacetophenone oxidase</fullName>
        <shortName evidence="5">MPAO</shortName>
        <ecNumber evidence="6">1.-.-.-</ecNumber>
    </recommendedName>
    <alternativeName>
        <fullName evidence="5">Cytochrome P450 monooxygenase MPAO</fullName>
    </alternativeName>
    <alternativeName>
        <fullName evidence="6">Usnic acid biosynthesis protein MPAO</fullName>
    </alternativeName>
</protein>
<gene>
    <name evidence="5" type="primary">MPAO</name>
</gene>